<comment type="function">
    <text evidence="1">Protein S19 forms a complex with S13 that binds strongly to the 16S ribosomal RNA.</text>
</comment>
<comment type="similarity">
    <text evidence="1">Belongs to the universal ribosomal protein uS19 family.</text>
</comment>
<evidence type="ECO:0000255" key="1">
    <source>
        <dbReference type="HAMAP-Rule" id="MF_00531"/>
    </source>
</evidence>
<evidence type="ECO:0000305" key="2"/>
<dbReference type="EMBL" id="CP000703">
    <property type="protein sequence ID" value="ABQ50053.1"/>
    <property type="molecule type" value="Genomic_DNA"/>
</dbReference>
<dbReference type="RefSeq" id="WP_000124353.1">
    <property type="nucleotide sequence ID" value="NC_009487.1"/>
</dbReference>
<dbReference type="SMR" id="A5IV30"/>
<dbReference type="GeneID" id="98346558"/>
<dbReference type="KEGG" id="saj:SaurJH9_2273"/>
<dbReference type="HOGENOM" id="CLU_144911_0_1_9"/>
<dbReference type="GO" id="GO:0005737">
    <property type="term" value="C:cytoplasm"/>
    <property type="evidence" value="ECO:0007669"/>
    <property type="project" value="UniProtKB-ARBA"/>
</dbReference>
<dbReference type="GO" id="GO:0015935">
    <property type="term" value="C:small ribosomal subunit"/>
    <property type="evidence" value="ECO:0007669"/>
    <property type="project" value="InterPro"/>
</dbReference>
<dbReference type="GO" id="GO:0019843">
    <property type="term" value="F:rRNA binding"/>
    <property type="evidence" value="ECO:0007669"/>
    <property type="project" value="UniProtKB-UniRule"/>
</dbReference>
<dbReference type="GO" id="GO:0003735">
    <property type="term" value="F:structural constituent of ribosome"/>
    <property type="evidence" value="ECO:0007669"/>
    <property type="project" value="InterPro"/>
</dbReference>
<dbReference type="GO" id="GO:0000028">
    <property type="term" value="P:ribosomal small subunit assembly"/>
    <property type="evidence" value="ECO:0007669"/>
    <property type="project" value="TreeGrafter"/>
</dbReference>
<dbReference type="GO" id="GO:0006412">
    <property type="term" value="P:translation"/>
    <property type="evidence" value="ECO:0007669"/>
    <property type="project" value="UniProtKB-UniRule"/>
</dbReference>
<dbReference type="FunFam" id="3.30.860.10:FF:000001">
    <property type="entry name" value="30S ribosomal protein S19"/>
    <property type="match status" value="1"/>
</dbReference>
<dbReference type="Gene3D" id="3.30.860.10">
    <property type="entry name" value="30s Ribosomal Protein S19, Chain A"/>
    <property type="match status" value="1"/>
</dbReference>
<dbReference type="HAMAP" id="MF_00531">
    <property type="entry name" value="Ribosomal_uS19"/>
    <property type="match status" value="1"/>
</dbReference>
<dbReference type="InterPro" id="IPR002222">
    <property type="entry name" value="Ribosomal_uS19"/>
</dbReference>
<dbReference type="InterPro" id="IPR005732">
    <property type="entry name" value="Ribosomal_uS19_bac-type"/>
</dbReference>
<dbReference type="InterPro" id="IPR020934">
    <property type="entry name" value="Ribosomal_uS19_CS"/>
</dbReference>
<dbReference type="InterPro" id="IPR023575">
    <property type="entry name" value="Ribosomal_uS19_SF"/>
</dbReference>
<dbReference type="NCBIfam" id="TIGR01050">
    <property type="entry name" value="rpsS_bact"/>
    <property type="match status" value="1"/>
</dbReference>
<dbReference type="PANTHER" id="PTHR11880">
    <property type="entry name" value="RIBOSOMAL PROTEIN S19P FAMILY MEMBER"/>
    <property type="match status" value="1"/>
</dbReference>
<dbReference type="PANTHER" id="PTHR11880:SF8">
    <property type="entry name" value="SMALL RIBOSOMAL SUBUNIT PROTEIN US19M"/>
    <property type="match status" value="1"/>
</dbReference>
<dbReference type="Pfam" id="PF00203">
    <property type="entry name" value="Ribosomal_S19"/>
    <property type="match status" value="1"/>
</dbReference>
<dbReference type="PIRSF" id="PIRSF002144">
    <property type="entry name" value="Ribosomal_S19"/>
    <property type="match status" value="1"/>
</dbReference>
<dbReference type="PRINTS" id="PR00975">
    <property type="entry name" value="RIBOSOMALS19"/>
</dbReference>
<dbReference type="SUPFAM" id="SSF54570">
    <property type="entry name" value="Ribosomal protein S19"/>
    <property type="match status" value="1"/>
</dbReference>
<dbReference type="PROSITE" id="PS00323">
    <property type="entry name" value="RIBOSOMAL_S19"/>
    <property type="match status" value="1"/>
</dbReference>
<protein>
    <recommendedName>
        <fullName evidence="1">Small ribosomal subunit protein uS19</fullName>
    </recommendedName>
    <alternativeName>
        <fullName evidence="2">30S ribosomal protein S19</fullName>
    </alternativeName>
</protein>
<accession>A5IV30</accession>
<sequence>MARSIKKGPFVDEHLMKKVEAQEGSEKKQVIKTWSRRSTIFPNFIGHTFAVYDGRKHVPVYVTEDMVGHKLGEFAPTRTFKGHVADDKKTRR</sequence>
<name>RS19_STAA9</name>
<proteinExistence type="inferred from homology"/>
<keyword id="KW-0687">Ribonucleoprotein</keyword>
<keyword id="KW-0689">Ribosomal protein</keyword>
<keyword id="KW-0694">RNA-binding</keyword>
<keyword id="KW-0699">rRNA-binding</keyword>
<organism>
    <name type="scientific">Staphylococcus aureus (strain JH9)</name>
    <dbReference type="NCBI Taxonomy" id="359786"/>
    <lineage>
        <taxon>Bacteria</taxon>
        <taxon>Bacillati</taxon>
        <taxon>Bacillota</taxon>
        <taxon>Bacilli</taxon>
        <taxon>Bacillales</taxon>
        <taxon>Staphylococcaceae</taxon>
        <taxon>Staphylococcus</taxon>
    </lineage>
</organism>
<reference key="1">
    <citation type="submission" date="2007-05" db="EMBL/GenBank/DDBJ databases">
        <title>Complete sequence of chromosome of Staphylococcus aureus subsp. aureus JH9.</title>
        <authorList>
            <consortium name="US DOE Joint Genome Institute"/>
            <person name="Copeland A."/>
            <person name="Lucas S."/>
            <person name="Lapidus A."/>
            <person name="Barry K."/>
            <person name="Detter J.C."/>
            <person name="Glavina del Rio T."/>
            <person name="Hammon N."/>
            <person name="Israni S."/>
            <person name="Pitluck S."/>
            <person name="Chain P."/>
            <person name="Malfatti S."/>
            <person name="Shin M."/>
            <person name="Vergez L."/>
            <person name="Schmutz J."/>
            <person name="Larimer F."/>
            <person name="Land M."/>
            <person name="Hauser L."/>
            <person name="Kyrpides N."/>
            <person name="Kim E."/>
            <person name="Tomasz A."/>
            <person name="Richardson P."/>
        </authorList>
    </citation>
    <scope>NUCLEOTIDE SEQUENCE [LARGE SCALE GENOMIC DNA]</scope>
    <source>
        <strain>JH9</strain>
    </source>
</reference>
<gene>
    <name evidence="1" type="primary">rpsS</name>
    <name type="ordered locus">SaurJH9_2273</name>
</gene>
<feature type="chain" id="PRO_1000081797" description="Small ribosomal subunit protein uS19">
    <location>
        <begin position="1"/>
        <end position="92"/>
    </location>
</feature>